<comment type="function">
    <text evidence="1">Protein S19 forms a complex with S13 that binds strongly to the 16S ribosomal RNA.</text>
</comment>
<comment type="similarity">
    <text evidence="2">Belongs to the universal ribosomal protein uS19 family.</text>
</comment>
<keyword id="KW-0687">Ribonucleoprotein</keyword>
<keyword id="KW-0689">Ribosomal protein</keyword>
<keyword id="KW-0694">RNA-binding</keyword>
<keyword id="KW-0699">rRNA-binding</keyword>
<evidence type="ECO:0000250" key="1"/>
<evidence type="ECO:0000305" key="2"/>
<organism>
    <name type="scientific">Helicobacter pylori (strain J99 / ATCC 700824)</name>
    <name type="common">Campylobacter pylori J99</name>
    <dbReference type="NCBI Taxonomy" id="85963"/>
    <lineage>
        <taxon>Bacteria</taxon>
        <taxon>Pseudomonadati</taxon>
        <taxon>Campylobacterota</taxon>
        <taxon>Epsilonproteobacteria</taxon>
        <taxon>Campylobacterales</taxon>
        <taxon>Helicobacteraceae</taxon>
        <taxon>Helicobacter</taxon>
    </lineage>
</organism>
<accession>Q9ZJR7</accession>
<feature type="chain" id="PRO_0000129834" description="Small ribosomal subunit protein uS19">
    <location>
        <begin position="1"/>
        <end position="93"/>
    </location>
</feature>
<reference key="1">
    <citation type="journal article" date="1999" name="Nature">
        <title>Genomic sequence comparison of two unrelated isolates of the human gastric pathogen Helicobacter pylori.</title>
        <authorList>
            <person name="Alm R.A."/>
            <person name="Ling L.-S.L."/>
            <person name="Moir D.T."/>
            <person name="King B.L."/>
            <person name="Brown E.D."/>
            <person name="Doig P.C."/>
            <person name="Smith D.R."/>
            <person name="Noonan B."/>
            <person name="Guild B.C."/>
            <person name="deJonge B.L."/>
            <person name="Carmel G."/>
            <person name="Tummino P.J."/>
            <person name="Caruso A."/>
            <person name="Uria-Nickelsen M."/>
            <person name="Mills D.M."/>
            <person name="Ives C."/>
            <person name="Gibson R."/>
            <person name="Merberg D."/>
            <person name="Mills S.D."/>
            <person name="Jiang Q."/>
            <person name="Taylor D.E."/>
            <person name="Vovis G.F."/>
            <person name="Trust T.J."/>
        </authorList>
    </citation>
    <scope>NUCLEOTIDE SEQUENCE [LARGE SCALE GENOMIC DNA]</scope>
    <source>
        <strain>J99 / ATCC 700824</strain>
    </source>
</reference>
<proteinExistence type="inferred from homology"/>
<gene>
    <name type="primary">rpsS</name>
    <name type="ordered locus">jhp_1235</name>
</gene>
<dbReference type="EMBL" id="AE001439">
    <property type="protein sequence ID" value="AAD06786.1"/>
    <property type="molecule type" value="Genomic_DNA"/>
</dbReference>
<dbReference type="PIR" id="C71835">
    <property type="entry name" value="C71835"/>
</dbReference>
<dbReference type="RefSeq" id="WP_000091385.1">
    <property type="nucleotide sequence ID" value="NZ_CP011330.1"/>
</dbReference>
<dbReference type="SMR" id="Q9ZJR7"/>
<dbReference type="GeneID" id="93237554"/>
<dbReference type="KEGG" id="hpj:jhp_1235"/>
<dbReference type="PATRIC" id="fig|85963.30.peg.1336"/>
<dbReference type="eggNOG" id="COG0185">
    <property type="taxonomic scope" value="Bacteria"/>
</dbReference>
<dbReference type="Proteomes" id="UP000000804">
    <property type="component" value="Chromosome"/>
</dbReference>
<dbReference type="GO" id="GO:0005737">
    <property type="term" value="C:cytoplasm"/>
    <property type="evidence" value="ECO:0007669"/>
    <property type="project" value="UniProtKB-ARBA"/>
</dbReference>
<dbReference type="GO" id="GO:0015935">
    <property type="term" value="C:small ribosomal subunit"/>
    <property type="evidence" value="ECO:0007669"/>
    <property type="project" value="InterPro"/>
</dbReference>
<dbReference type="GO" id="GO:0019843">
    <property type="term" value="F:rRNA binding"/>
    <property type="evidence" value="ECO:0007669"/>
    <property type="project" value="UniProtKB-UniRule"/>
</dbReference>
<dbReference type="GO" id="GO:0003735">
    <property type="term" value="F:structural constituent of ribosome"/>
    <property type="evidence" value="ECO:0007669"/>
    <property type="project" value="InterPro"/>
</dbReference>
<dbReference type="GO" id="GO:0000028">
    <property type="term" value="P:ribosomal small subunit assembly"/>
    <property type="evidence" value="ECO:0007669"/>
    <property type="project" value="TreeGrafter"/>
</dbReference>
<dbReference type="GO" id="GO:0006412">
    <property type="term" value="P:translation"/>
    <property type="evidence" value="ECO:0007669"/>
    <property type="project" value="UniProtKB-UniRule"/>
</dbReference>
<dbReference type="FunFam" id="3.30.860.10:FF:000001">
    <property type="entry name" value="30S ribosomal protein S19"/>
    <property type="match status" value="1"/>
</dbReference>
<dbReference type="Gene3D" id="3.30.860.10">
    <property type="entry name" value="30s Ribosomal Protein S19, Chain A"/>
    <property type="match status" value="1"/>
</dbReference>
<dbReference type="HAMAP" id="MF_00531">
    <property type="entry name" value="Ribosomal_uS19"/>
    <property type="match status" value="1"/>
</dbReference>
<dbReference type="InterPro" id="IPR002222">
    <property type="entry name" value="Ribosomal_uS19"/>
</dbReference>
<dbReference type="InterPro" id="IPR005732">
    <property type="entry name" value="Ribosomal_uS19_bac-type"/>
</dbReference>
<dbReference type="InterPro" id="IPR020934">
    <property type="entry name" value="Ribosomal_uS19_CS"/>
</dbReference>
<dbReference type="InterPro" id="IPR023575">
    <property type="entry name" value="Ribosomal_uS19_SF"/>
</dbReference>
<dbReference type="NCBIfam" id="TIGR01050">
    <property type="entry name" value="rpsS_bact"/>
    <property type="match status" value="1"/>
</dbReference>
<dbReference type="PANTHER" id="PTHR11880">
    <property type="entry name" value="RIBOSOMAL PROTEIN S19P FAMILY MEMBER"/>
    <property type="match status" value="1"/>
</dbReference>
<dbReference type="PANTHER" id="PTHR11880:SF8">
    <property type="entry name" value="SMALL RIBOSOMAL SUBUNIT PROTEIN US19M"/>
    <property type="match status" value="1"/>
</dbReference>
<dbReference type="Pfam" id="PF00203">
    <property type="entry name" value="Ribosomal_S19"/>
    <property type="match status" value="1"/>
</dbReference>
<dbReference type="PIRSF" id="PIRSF002144">
    <property type="entry name" value="Ribosomal_S19"/>
    <property type="match status" value="1"/>
</dbReference>
<dbReference type="PRINTS" id="PR00975">
    <property type="entry name" value="RIBOSOMALS19"/>
</dbReference>
<dbReference type="SUPFAM" id="SSF54570">
    <property type="entry name" value="Ribosomal protein S19"/>
    <property type="match status" value="1"/>
</dbReference>
<dbReference type="PROSITE" id="PS00323">
    <property type="entry name" value="RIBOSOMAL_S19"/>
    <property type="match status" value="1"/>
</dbReference>
<name>RS19_HELPJ</name>
<sequence>MSRSIKKGPFIDDHLMKKTLKAKEGKDNRPIKTWSRRSTILPEMIGFTYNVHNGRVFVPVYITENHVGYKLGEFAPTRTFKGHKGSVQKKIGK</sequence>
<protein>
    <recommendedName>
        <fullName evidence="2">Small ribosomal subunit protein uS19</fullName>
    </recommendedName>
    <alternativeName>
        <fullName>30S ribosomal protein S19</fullName>
    </alternativeName>
</protein>